<evidence type="ECO:0000255" key="1">
    <source>
        <dbReference type="HAMAP-Rule" id="MF_00815"/>
    </source>
</evidence>
<comment type="function">
    <text evidence="1">Produces ATP from ADP in the presence of a proton gradient across the membrane. The gamma chain is believed to be important in regulating ATPase activity and the flow of protons through the CF(0) complex.</text>
</comment>
<comment type="subunit">
    <text evidence="1">F-type ATPases have 2 components, CF(1) - the catalytic core - and CF(0) - the membrane proton channel. CF(1) has five subunits: alpha(3), beta(3), gamma(1), delta(1), epsilon(1). CF(0) has three main subunits: a, b and c.</text>
</comment>
<comment type="subcellular location">
    <subcellularLocation>
        <location evidence="1">Cell membrane</location>
        <topology evidence="1">Peripheral membrane protein</topology>
    </subcellularLocation>
</comment>
<comment type="similarity">
    <text evidence="1">Belongs to the ATPase gamma chain family.</text>
</comment>
<name>ATPG_CUTAK</name>
<sequence length="314" mass="34563">MASNLRELRERRNSVATTKKITRAMELIASSRIIKAQNTVKAAGPYSLELTRALSAVAAHTHEEHPLTSMNPDPKRSAVLVITSDRGLAGAYSSNVIRTAEELTTALQPKQEIATYLCGRKAVQYFEFRGRKVDHLWSGFSDSPSYRDAKDIADHLIEDFLRPTEEGGVDEIHMVYTEFESMLTQTPKVIRLLPLAVVDPQDTPEGQLAEGDPGVGANAEEIFHEYRFEPNPVSVLDELLPLYVANRVHYALLQSAASELASRQRAMKAATDNAEQLIQTLTRQANQARQAAITQEITEIVGGAAALAESAPQE</sequence>
<organism>
    <name type="scientific">Cutibacterium acnes (strain DSM 16379 / KPA171202)</name>
    <name type="common">Propionibacterium acnes</name>
    <dbReference type="NCBI Taxonomy" id="267747"/>
    <lineage>
        <taxon>Bacteria</taxon>
        <taxon>Bacillati</taxon>
        <taxon>Actinomycetota</taxon>
        <taxon>Actinomycetes</taxon>
        <taxon>Propionibacteriales</taxon>
        <taxon>Propionibacteriaceae</taxon>
        <taxon>Cutibacterium</taxon>
    </lineage>
</organism>
<reference key="1">
    <citation type="journal article" date="2004" name="Science">
        <title>The complete genome sequence of Propionibacterium acnes, a commensal of human skin.</title>
        <authorList>
            <person name="Brueggemann H."/>
            <person name="Henne A."/>
            <person name="Hoster F."/>
            <person name="Liesegang H."/>
            <person name="Wiezer A."/>
            <person name="Strittmatter A."/>
            <person name="Hujer S."/>
            <person name="Duerre P."/>
            <person name="Gottschalk G."/>
        </authorList>
    </citation>
    <scope>NUCLEOTIDE SEQUENCE [LARGE SCALE GENOMIC DNA]</scope>
    <source>
        <strain>DSM 16379 / KPA171202</strain>
    </source>
</reference>
<keyword id="KW-0066">ATP synthesis</keyword>
<keyword id="KW-1003">Cell membrane</keyword>
<keyword id="KW-0139">CF(1)</keyword>
<keyword id="KW-0375">Hydrogen ion transport</keyword>
<keyword id="KW-0406">Ion transport</keyword>
<keyword id="KW-0472">Membrane</keyword>
<keyword id="KW-0813">Transport</keyword>
<protein>
    <recommendedName>
        <fullName evidence="1">ATP synthase gamma chain</fullName>
    </recommendedName>
    <alternativeName>
        <fullName evidence="1">ATP synthase F1 sector gamma subunit</fullName>
    </alternativeName>
    <alternativeName>
        <fullName evidence="1">F-ATPase gamma subunit</fullName>
    </alternativeName>
</protein>
<proteinExistence type="inferred from homology"/>
<dbReference type="EMBL" id="AE017283">
    <property type="protein sequence ID" value="AAT82989.1"/>
    <property type="molecule type" value="Genomic_DNA"/>
</dbReference>
<dbReference type="RefSeq" id="WP_002516850.1">
    <property type="nucleotide sequence ID" value="NZ_CP025935.1"/>
</dbReference>
<dbReference type="SMR" id="Q6A8C6"/>
<dbReference type="EnsemblBacteria" id="AAT82989">
    <property type="protein sequence ID" value="AAT82989"/>
    <property type="gene ID" value="PPA1240"/>
</dbReference>
<dbReference type="KEGG" id="pac:PPA1240"/>
<dbReference type="eggNOG" id="COG0224">
    <property type="taxonomic scope" value="Bacteria"/>
</dbReference>
<dbReference type="HOGENOM" id="CLU_050669_0_0_11"/>
<dbReference type="Proteomes" id="UP000000603">
    <property type="component" value="Chromosome"/>
</dbReference>
<dbReference type="GO" id="GO:0005886">
    <property type="term" value="C:plasma membrane"/>
    <property type="evidence" value="ECO:0007669"/>
    <property type="project" value="UniProtKB-SubCell"/>
</dbReference>
<dbReference type="GO" id="GO:0045259">
    <property type="term" value="C:proton-transporting ATP synthase complex"/>
    <property type="evidence" value="ECO:0007669"/>
    <property type="project" value="UniProtKB-KW"/>
</dbReference>
<dbReference type="GO" id="GO:0005524">
    <property type="term" value="F:ATP binding"/>
    <property type="evidence" value="ECO:0007669"/>
    <property type="project" value="UniProtKB-UniRule"/>
</dbReference>
<dbReference type="GO" id="GO:0046933">
    <property type="term" value="F:proton-transporting ATP synthase activity, rotational mechanism"/>
    <property type="evidence" value="ECO:0007669"/>
    <property type="project" value="UniProtKB-UniRule"/>
</dbReference>
<dbReference type="GO" id="GO:0042777">
    <property type="term" value="P:proton motive force-driven plasma membrane ATP synthesis"/>
    <property type="evidence" value="ECO:0007669"/>
    <property type="project" value="UniProtKB-UniRule"/>
</dbReference>
<dbReference type="CDD" id="cd12151">
    <property type="entry name" value="F1-ATPase_gamma"/>
    <property type="match status" value="1"/>
</dbReference>
<dbReference type="Gene3D" id="3.40.1380.10">
    <property type="match status" value="1"/>
</dbReference>
<dbReference type="Gene3D" id="1.10.287.80">
    <property type="entry name" value="ATP synthase, gamma subunit, helix hairpin domain"/>
    <property type="match status" value="2"/>
</dbReference>
<dbReference type="HAMAP" id="MF_00815">
    <property type="entry name" value="ATP_synth_gamma_bact"/>
    <property type="match status" value="1"/>
</dbReference>
<dbReference type="InterPro" id="IPR035968">
    <property type="entry name" value="ATP_synth_F1_ATPase_gsu"/>
</dbReference>
<dbReference type="InterPro" id="IPR000131">
    <property type="entry name" value="ATP_synth_F1_gsu"/>
</dbReference>
<dbReference type="InterPro" id="IPR023632">
    <property type="entry name" value="ATP_synth_F1_gsu_CS"/>
</dbReference>
<dbReference type="NCBIfam" id="TIGR01146">
    <property type="entry name" value="ATPsyn_F1gamma"/>
    <property type="match status" value="1"/>
</dbReference>
<dbReference type="NCBIfam" id="NF004145">
    <property type="entry name" value="PRK05621.1-2"/>
    <property type="match status" value="1"/>
</dbReference>
<dbReference type="PANTHER" id="PTHR11693">
    <property type="entry name" value="ATP SYNTHASE GAMMA CHAIN"/>
    <property type="match status" value="1"/>
</dbReference>
<dbReference type="PANTHER" id="PTHR11693:SF22">
    <property type="entry name" value="ATP SYNTHASE SUBUNIT GAMMA, MITOCHONDRIAL"/>
    <property type="match status" value="1"/>
</dbReference>
<dbReference type="Pfam" id="PF00231">
    <property type="entry name" value="ATP-synt"/>
    <property type="match status" value="1"/>
</dbReference>
<dbReference type="PRINTS" id="PR00126">
    <property type="entry name" value="ATPASEGAMMA"/>
</dbReference>
<dbReference type="SUPFAM" id="SSF52943">
    <property type="entry name" value="ATP synthase (F1-ATPase), gamma subunit"/>
    <property type="match status" value="1"/>
</dbReference>
<dbReference type="PROSITE" id="PS00153">
    <property type="entry name" value="ATPASE_GAMMA"/>
    <property type="match status" value="1"/>
</dbReference>
<gene>
    <name evidence="1" type="primary">atpG</name>
    <name type="ordered locus">PPA1240</name>
</gene>
<accession>Q6A8C6</accession>
<feature type="chain" id="PRO_0000073343" description="ATP synthase gamma chain">
    <location>
        <begin position="1"/>
        <end position="314"/>
    </location>
</feature>